<name>GSA_PSEFS</name>
<protein>
    <recommendedName>
        <fullName evidence="1">Glutamate-1-semialdehyde 2,1-aminomutase</fullName>
        <shortName evidence="1">GSA</shortName>
        <ecNumber evidence="1">5.4.3.8</ecNumber>
    </recommendedName>
    <alternativeName>
        <fullName evidence="1">Glutamate-1-semialdehyde aminotransferase</fullName>
        <shortName evidence="1">GSA-AT</shortName>
    </alternativeName>
</protein>
<proteinExistence type="inferred from homology"/>
<gene>
    <name evidence="1" type="primary">hemL</name>
    <name type="ordered locus">PFLU_5401</name>
</gene>
<reference key="1">
    <citation type="journal article" date="2009" name="Genome Biol.">
        <title>Genomic and genetic analyses of diversity and plant interactions of Pseudomonas fluorescens.</title>
        <authorList>
            <person name="Silby M.W."/>
            <person name="Cerdeno-Tarraga A.M."/>
            <person name="Vernikos G.S."/>
            <person name="Giddens S.R."/>
            <person name="Jackson R.W."/>
            <person name="Preston G.M."/>
            <person name="Zhang X.-X."/>
            <person name="Moon C.D."/>
            <person name="Gehrig S.M."/>
            <person name="Godfrey S.A.C."/>
            <person name="Knight C.G."/>
            <person name="Malone J.G."/>
            <person name="Robinson Z."/>
            <person name="Spiers A.J."/>
            <person name="Harris S."/>
            <person name="Challis G.L."/>
            <person name="Yaxley A.M."/>
            <person name="Harris D."/>
            <person name="Seeger K."/>
            <person name="Murphy L."/>
            <person name="Rutter S."/>
            <person name="Squares R."/>
            <person name="Quail M.A."/>
            <person name="Saunders E."/>
            <person name="Mavromatis K."/>
            <person name="Brettin T.S."/>
            <person name="Bentley S.D."/>
            <person name="Hothersall J."/>
            <person name="Stephens E."/>
            <person name="Thomas C.M."/>
            <person name="Parkhill J."/>
            <person name="Levy S.B."/>
            <person name="Rainey P.B."/>
            <person name="Thomson N.R."/>
        </authorList>
    </citation>
    <scope>NUCLEOTIDE SEQUENCE [LARGE SCALE GENOMIC DNA]</scope>
    <source>
        <strain>SBW25</strain>
    </source>
</reference>
<evidence type="ECO:0000255" key="1">
    <source>
        <dbReference type="HAMAP-Rule" id="MF_00375"/>
    </source>
</evidence>
<comment type="catalytic activity">
    <reaction evidence="1">
        <text>(S)-4-amino-5-oxopentanoate = 5-aminolevulinate</text>
        <dbReference type="Rhea" id="RHEA:14265"/>
        <dbReference type="ChEBI" id="CHEBI:57501"/>
        <dbReference type="ChEBI" id="CHEBI:356416"/>
        <dbReference type="EC" id="5.4.3.8"/>
    </reaction>
</comment>
<comment type="cofactor">
    <cofactor evidence="1">
        <name>pyridoxal 5'-phosphate</name>
        <dbReference type="ChEBI" id="CHEBI:597326"/>
    </cofactor>
</comment>
<comment type="pathway">
    <text evidence="1">Porphyrin-containing compound metabolism; protoporphyrin-IX biosynthesis; 5-aminolevulinate from L-glutamyl-tRNA(Glu): step 2/2.</text>
</comment>
<comment type="subunit">
    <text evidence="1">Homodimer.</text>
</comment>
<comment type="subcellular location">
    <subcellularLocation>
        <location evidence="1">Cytoplasm</location>
    </subcellularLocation>
</comment>
<comment type="similarity">
    <text evidence="1">Belongs to the class-III pyridoxal-phosphate-dependent aminotransferase family. HemL subfamily.</text>
</comment>
<keyword id="KW-0963">Cytoplasm</keyword>
<keyword id="KW-0413">Isomerase</keyword>
<keyword id="KW-0627">Porphyrin biosynthesis</keyword>
<keyword id="KW-0663">Pyridoxal phosphate</keyword>
<organism>
    <name type="scientific">Pseudomonas fluorescens (strain SBW25)</name>
    <dbReference type="NCBI Taxonomy" id="216595"/>
    <lineage>
        <taxon>Bacteria</taxon>
        <taxon>Pseudomonadati</taxon>
        <taxon>Pseudomonadota</taxon>
        <taxon>Gammaproteobacteria</taxon>
        <taxon>Pseudomonadales</taxon>
        <taxon>Pseudomonadaceae</taxon>
        <taxon>Pseudomonas</taxon>
    </lineage>
</organism>
<feature type="chain" id="PRO_0000382360" description="Glutamate-1-semialdehyde 2,1-aminomutase">
    <location>
        <begin position="1"/>
        <end position="427"/>
    </location>
</feature>
<feature type="modified residue" description="N6-(pyridoxal phosphate)lysine" evidence="1">
    <location>
        <position position="265"/>
    </location>
</feature>
<sequence>MSRSETLFANAQKHIPGGVNSPVRAFKSVGGTPLFFKHAEGAYVTDEDDKRYVDYVGSWGPMILGHSHPDVLDAVRKQLEHGLSYGAPTAMETEMADLVCAIVPSMEMVRMVSSGTEATMSAIRLARGFTGRDSIIKFEGCYHGHSDSLLVKAGSGLLTQGVPSSAGVPAAFAKHTLTLPFNDIAAVEQMLNEVGQDVACIIVEPVAGNMNCVPPAPGFLEGLREQCDKHGVVLIFDEVMTGFRVALGGAQAHYGVTPDLSTFGKIIGGGMPVGCFGGKREIMQHIAPLGPVYQAGTLSGNPLAMAAGLTTLRLISRPGFHAELTDYTTRLLDGLQQRADAAGIPFVTTQAGGMFGLYFSGADDIVTFDDVMGSDADLFKRFFHLMLEGGVYLAPSAFEAGFTSIAHGDAELKLTLDAAERAFAALK</sequence>
<dbReference type="EC" id="5.4.3.8" evidence="1"/>
<dbReference type="EMBL" id="AM181176">
    <property type="protein sequence ID" value="CAY52567.1"/>
    <property type="molecule type" value="Genomic_DNA"/>
</dbReference>
<dbReference type="RefSeq" id="WP_015886047.1">
    <property type="nucleotide sequence ID" value="NC_012660.1"/>
</dbReference>
<dbReference type="SMR" id="C3K2K3"/>
<dbReference type="STRING" id="294.SRM1_05022"/>
<dbReference type="GeneID" id="93467022"/>
<dbReference type="eggNOG" id="COG0001">
    <property type="taxonomic scope" value="Bacteria"/>
</dbReference>
<dbReference type="HOGENOM" id="CLU_016922_1_5_6"/>
<dbReference type="OrthoDB" id="9801052at2"/>
<dbReference type="UniPathway" id="UPA00251">
    <property type="reaction ID" value="UER00317"/>
</dbReference>
<dbReference type="GO" id="GO:0005737">
    <property type="term" value="C:cytoplasm"/>
    <property type="evidence" value="ECO:0007669"/>
    <property type="project" value="UniProtKB-SubCell"/>
</dbReference>
<dbReference type="GO" id="GO:0042286">
    <property type="term" value="F:glutamate-1-semialdehyde 2,1-aminomutase activity"/>
    <property type="evidence" value="ECO:0007669"/>
    <property type="project" value="UniProtKB-UniRule"/>
</dbReference>
<dbReference type="GO" id="GO:0030170">
    <property type="term" value="F:pyridoxal phosphate binding"/>
    <property type="evidence" value="ECO:0007669"/>
    <property type="project" value="InterPro"/>
</dbReference>
<dbReference type="GO" id="GO:0008483">
    <property type="term" value="F:transaminase activity"/>
    <property type="evidence" value="ECO:0007669"/>
    <property type="project" value="InterPro"/>
</dbReference>
<dbReference type="GO" id="GO:0006782">
    <property type="term" value="P:protoporphyrinogen IX biosynthetic process"/>
    <property type="evidence" value="ECO:0007669"/>
    <property type="project" value="UniProtKB-UniRule"/>
</dbReference>
<dbReference type="CDD" id="cd00610">
    <property type="entry name" value="OAT_like"/>
    <property type="match status" value="1"/>
</dbReference>
<dbReference type="FunFam" id="3.40.640.10:FF:000021">
    <property type="entry name" value="Glutamate-1-semialdehyde 2,1-aminomutase"/>
    <property type="match status" value="1"/>
</dbReference>
<dbReference type="Gene3D" id="3.90.1150.10">
    <property type="entry name" value="Aspartate Aminotransferase, domain 1"/>
    <property type="match status" value="1"/>
</dbReference>
<dbReference type="Gene3D" id="3.40.640.10">
    <property type="entry name" value="Type I PLP-dependent aspartate aminotransferase-like (Major domain)"/>
    <property type="match status" value="1"/>
</dbReference>
<dbReference type="HAMAP" id="MF_00375">
    <property type="entry name" value="HemL_aminotrans_3"/>
    <property type="match status" value="1"/>
</dbReference>
<dbReference type="InterPro" id="IPR004639">
    <property type="entry name" value="4pyrrol_synth_GluAld_NH2Trfase"/>
</dbReference>
<dbReference type="InterPro" id="IPR005814">
    <property type="entry name" value="Aminotrans_3"/>
</dbReference>
<dbReference type="InterPro" id="IPR049704">
    <property type="entry name" value="Aminotrans_3_PPA_site"/>
</dbReference>
<dbReference type="InterPro" id="IPR015424">
    <property type="entry name" value="PyrdxlP-dep_Trfase"/>
</dbReference>
<dbReference type="InterPro" id="IPR015421">
    <property type="entry name" value="PyrdxlP-dep_Trfase_major"/>
</dbReference>
<dbReference type="InterPro" id="IPR015422">
    <property type="entry name" value="PyrdxlP-dep_Trfase_small"/>
</dbReference>
<dbReference type="NCBIfam" id="TIGR00713">
    <property type="entry name" value="hemL"/>
    <property type="match status" value="1"/>
</dbReference>
<dbReference type="NCBIfam" id="NF000818">
    <property type="entry name" value="PRK00062.1"/>
    <property type="match status" value="1"/>
</dbReference>
<dbReference type="PANTHER" id="PTHR43713">
    <property type="entry name" value="GLUTAMATE-1-SEMIALDEHYDE 2,1-AMINOMUTASE"/>
    <property type="match status" value="1"/>
</dbReference>
<dbReference type="PANTHER" id="PTHR43713:SF3">
    <property type="entry name" value="GLUTAMATE-1-SEMIALDEHYDE 2,1-AMINOMUTASE 1, CHLOROPLASTIC-RELATED"/>
    <property type="match status" value="1"/>
</dbReference>
<dbReference type="Pfam" id="PF00202">
    <property type="entry name" value="Aminotran_3"/>
    <property type="match status" value="1"/>
</dbReference>
<dbReference type="SUPFAM" id="SSF53383">
    <property type="entry name" value="PLP-dependent transferases"/>
    <property type="match status" value="1"/>
</dbReference>
<dbReference type="PROSITE" id="PS00600">
    <property type="entry name" value="AA_TRANSFER_CLASS_3"/>
    <property type="match status" value="1"/>
</dbReference>
<accession>C3K2K3</accession>